<protein>
    <recommendedName>
        <fullName evidence="1">Small ribosomal subunit protein uS7</fullName>
    </recommendedName>
    <alternativeName>
        <fullName evidence="2">30S ribosomal protein S7</fullName>
    </alternativeName>
</protein>
<keyword id="KW-0002">3D-structure</keyword>
<keyword id="KW-1185">Reference proteome</keyword>
<keyword id="KW-0687">Ribonucleoprotein</keyword>
<keyword id="KW-0689">Ribosomal protein</keyword>
<keyword id="KW-0694">RNA-binding</keyword>
<keyword id="KW-0699">rRNA-binding</keyword>
<keyword id="KW-0820">tRNA-binding</keyword>
<comment type="function">
    <text evidence="1">One of the primary rRNA binding proteins, it binds directly to 16S rRNA where it nucleates assembly of the head domain of the 30S subunit. Is located at the subunit interface close to the decoding center, probably blocks exit of the E-site tRNA.</text>
</comment>
<comment type="subunit">
    <text evidence="1">Part of the 30S ribosomal subunit. Contacts proteins S9 and S11.</text>
</comment>
<comment type="similarity">
    <text evidence="1">Belongs to the universal ribosomal protein uS7 family.</text>
</comment>
<dbReference type="EMBL" id="AF400111">
    <property type="protein sequence ID" value="AAM89911.1"/>
    <property type="molecule type" value="Genomic_DNA"/>
</dbReference>
<dbReference type="EMBL" id="AE000783">
    <property type="protein sequence ID" value="AAB91504.1"/>
    <property type="molecule type" value="Genomic_DNA"/>
</dbReference>
<dbReference type="PIR" id="A70148">
    <property type="entry name" value="A70148"/>
</dbReference>
<dbReference type="RefSeq" id="NP_212520.1">
    <property type="nucleotide sequence ID" value="NC_001318.1"/>
</dbReference>
<dbReference type="RefSeq" id="WP_002556981.1">
    <property type="nucleotide sequence ID" value="NC_001318.1"/>
</dbReference>
<dbReference type="PDB" id="8FMW">
    <property type="method" value="EM"/>
    <property type="resolution" value="2.86 A"/>
    <property type="chains" value="G=1-157"/>
</dbReference>
<dbReference type="PDBsum" id="8FMW"/>
<dbReference type="EMDB" id="EMD-29298"/>
<dbReference type="SMR" id="O51347"/>
<dbReference type="STRING" id="224326.BB_0386"/>
<dbReference type="PaxDb" id="224326-BB_0386"/>
<dbReference type="EnsemblBacteria" id="AAB91504">
    <property type="protein sequence ID" value="AAB91504"/>
    <property type="gene ID" value="BB_0386"/>
</dbReference>
<dbReference type="GeneID" id="56567814"/>
<dbReference type="KEGG" id="bbu:BB_0386"/>
<dbReference type="PATRIC" id="fig|224326.49.peg.781"/>
<dbReference type="HOGENOM" id="CLU_072226_1_1_12"/>
<dbReference type="OrthoDB" id="9807653at2"/>
<dbReference type="Proteomes" id="UP000001807">
    <property type="component" value="Chromosome"/>
</dbReference>
<dbReference type="GO" id="GO:0015935">
    <property type="term" value="C:small ribosomal subunit"/>
    <property type="evidence" value="ECO:0007669"/>
    <property type="project" value="InterPro"/>
</dbReference>
<dbReference type="GO" id="GO:0019843">
    <property type="term" value="F:rRNA binding"/>
    <property type="evidence" value="ECO:0007669"/>
    <property type="project" value="UniProtKB-UniRule"/>
</dbReference>
<dbReference type="GO" id="GO:0003735">
    <property type="term" value="F:structural constituent of ribosome"/>
    <property type="evidence" value="ECO:0007669"/>
    <property type="project" value="InterPro"/>
</dbReference>
<dbReference type="GO" id="GO:0000049">
    <property type="term" value="F:tRNA binding"/>
    <property type="evidence" value="ECO:0007669"/>
    <property type="project" value="UniProtKB-UniRule"/>
</dbReference>
<dbReference type="GO" id="GO:0006412">
    <property type="term" value="P:translation"/>
    <property type="evidence" value="ECO:0007669"/>
    <property type="project" value="UniProtKB-UniRule"/>
</dbReference>
<dbReference type="CDD" id="cd14869">
    <property type="entry name" value="uS7_Bacteria"/>
    <property type="match status" value="1"/>
</dbReference>
<dbReference type="FunFam" id="1.10.455.10:FF:000001">
    <property type="entry name" value="30S ribosomal protein S7"/>
    <property type="match status" value="1"/>
</dbReference>
<dbReference type="Gene3D" id="1.10.455.10">
    <property type="entry name" value="Ribosomal protein S7 domain"/>
    <property type="match status" value="1"/>
</dbReference>
<dbReference type="HAMAP" id="MF_00480_B">
    <property type="entry name" value="Ribosomal_uS7_B"/>
    <property type="match status" value="1"/>
</dbReference>
<dbReference type="InterPro" id="IPR000235">
    <property type="entry name" value="Ribosomal_uS7"/>
</dbReference>
<dbReference type="InterPro" id="IPR005717">
    <property type="entry name" value="Ribosomal_uS7_bac/org-type"/>
</dbReference>
<dbReference type="InterPro" id="IPR020606">
    <property type="entry name" value="Ribosomal_uS7_CS"/>
</dbReference>
<dbReference type="InterPro" id="IPR023798">
    <property type="entry name" value="Ribosomal_uS7_dom"/>
</dbReference>
<dbReference type="InterPro" id="IPR036823">
    <property type="entry name" value="Ribosomal_uS7_dom_sf"/>
</dbReference>
<dbReference type="NCBIfam" id="TIGR01029">
    <property type="entry name" value="rpsG_bact"/>
    <property type="match status" value="1"/>
</dbReference>
<dbReference type="PANTHER" id="PTHR11205">
    <property type="entry name" value="RIBOSOMAL PROTEIN S7"/>
    <property type="match status" value="1"/>
</dbReference>
<dbReference type="Pfam" id="PF00177">
    <property type="entry name" value="Ribosomal_S7"/>
    <property type="match status" value="1"/>
</dbReference>
<dbReference type="PIRSF" id="PIRSF002122">
    <property type="entry name" value="RPS7p_RPS7a_RPS5e_RPS7o"/>
    <property type="match status" value="1"/>
</dbReference>
<dbReference type="SUPFAM" id="SSF47973">
    <property type="entry name" value="Ribosomal protein S7"/>
    <property type="match status" value="1"/>
</dbReference>
<dbReference type="PROSITE" id="PS00052">
    <property type="entry name" value="RIBOSOMAL_S7"/>
    <property type="match status" value="1"/>
</dbReference>
<proteinExistence type="evidence at protein level"/>
<reference key="1">
    <citation type="submission" date="2001-07" db="EMBL/GenBank/DDBJ databases">
        <authorList>
            <person name="Orlova T."/>
            <person name="Bugrysheva J."/>
            <person name="Novikova S."/>
            <person name="Godfrey H.P."/>
            <person name="Cabello F.C."/>
        </authorList>
    </citation>
    <scope>NUCLEOTIDE SEQUENCE [GENOMIC DNA]</scope>
    <source>
        <strain>BL206</strain>
    </source>
</reference>
<reference key="2">
    <citation type="journal article" date="1997" name="Nature">
        <title>Genomic sequence of a Lyme disease spirochaete, Borrelia burgdorferi.</title>
        <authorList>
            <person name="Fraser C.M."/>
            <person name="Casjens S."/>
            <person name="Huang W.M."/>
            <person name="Sutton G.G."/>
            <person name="Clayton R.A."/>
            <person name="Lathigra R."/>
            <person name="White O."/>
            <person name="Ketchum K.A."/>
            <person name="Dodson R.J."/>
            <person name="Hickey E.K."/>
            <person name="Gwinn M.L."/>
            <person name="Dougherty B.A."/>
            <person name="Tomb J.-F."/>
            <person name="Fleischmann R.D."/>
            <person name="Richardson D.L."/>
            <person name="Peterson J.D."/>
            <person name="Kerlavage A.R."/>
            <person name="Quackenbush J."/>
            <person name="Salzberg S.L."/>
            <person name="Hanson M."/>
            <person name="van Vugt R."/>
            <person name="Palmer N."/>
            <person name="Adams M.D."/>
            <person name="Gocayne J.D."/>
            <person name="Weidman J.F."/>
            <person name="Utterback T.R."/>
            <person name="Watthey L."/>
            <person name="McDonald L.A."/>
            <person name="Artiach P."/>
            <person name="Bowman C."/>
            <person name="Garland S.A."/>
            <person name="Fujii C."/>
            <person name="Cotton M.D."/>
            <person name="Horst K."/>
            <person name="Roberts K.M."/>
            <person name="Hatch B."/>
            <person name="Smith H.O."/>
            <person name="Venter J.C."/>
        </authorList>
    </citation>
    <scope>NUCLEOTIDE SEQUENCE [LARGE SCALE GENOMIC DNA]</scope>
    <source>
        <strain>ATCC 35210 / DSM 4680 / CIP 102532 / B31</strain>
    </source>
</reference>
<feature type="chain" id="PRO_0000124226" description="Small ribosomal subunit protein uS7">
    <location>
        <begin position="1"/>
        <end position="157"/>
    </location>
</feature>
<gene>
    <name evidence="1" type="primary">rpsG</name>
    <name type="ordered locus">BB_0386</name>
</gene>
<organism>
    <name type="scientific">Borreliella burgdorferi (strain ATCC 35210 / DSM 4680 / CIP 102532 / B31)</name>
    <name type="common">Borrelia burgdorferi</name>
    <dbReference type="NCBI Taxonomy" id="224326"/>
    <lineage>
        <taxon>Bacteria</taxon>
        <taxon>Pseudomonadati</taxon>
        <taxon>Spirochaetota</taxon>
        <taxon>Spirochaetia</taxon>
        <taxon>Spirochaetales</taxon>
        <taxon>Borreliaceae</taxon>
        <taxon>Borreliella</taxon>
    </lineage>
</organism>
<accession>O51347</accession>
<name>RS7_BORBU</name>
<sequence length="157" mass="18252">MSRKNKKIKKKVFVDTRYNSRIVAKFANRMMYDGKKSISESILYSSIDLLADKLEESDKMAVFYKALDNIKPLVEVRSRRVGGATYQVPVEVREERREALAMKWIIFAARKSSGRSMKEKLSNELLNAYNSTGAAFKKKEDTHRMAEANKAFTHYRW</sequence>
<evidence type="ECO:0000255" key="1">
    <source>
        <dbReference type="HAMAP-Rule" id="MF_00480"/>
    </source>
</evidence>
<evidence type="ECO:0000305" key="2"/>